<dbReference type="EC" id="1.6.-.-"/>
<dbReference type="EMBL" id="BA000017">
    <property type="protein sequence ID" value="BAB56544.1"/>
    <property type="molecule type" value="Genomic_DNA"/>
</dbReference>
<dbReference type="SMR" id="Q99WJ6"/>
<dbReference type="KEGG" id="sav:SAV0382"/>
<dbReference type="HOGENOM" id="CLU_070764_0_0_9"/>
<dbReference type="PhylomeDB" id="Q99WJ6"/>
<dbReference type="Proteomes" id="UP000002481">
    <property type="component" value="Chromosome"/>
</dbReference>
<dbReference type="GO" id="GO:0016491">
    <property type="term" value="F:oxidoreductase activity"/>
    <property type="evidence" value="ECO:0007669"/>
    <property type="project" value="UniProtKB-KW"/>
</dbReference>
<dbReference type="CDD" id="cd02146">
    <property type="entry name" value="NfsA-like"/>
    <property type="match status" value="1"/>
</dbReference>
<dbReference type="Gene3D" id="3.40.109.10">
    <property type="entry name" value="NADH Oxidase"/>
    <property type="match status" value="1"/>
</dbReference>
<dbReference type="InterPro" id="IPR016446">
    <property type="entry name" value="Flavin_OxRdtase_Frp"/>
</dbReference>
<dbReference type="InterPro" id="IPR029479">
    <property type="entry name" value="Nitroreductase"/>
</dbReference>
<dbReference type="InterPro" id="IPR000415">
    <property type="entry name" value="Nitroreductase-like"/>
</dbReference>
<dbReference type="NCBIfam" id="NF008033">
    <property type="entry name" value="PRK10765.1"/>
    <property type="match status" value="1"/>
</dbReference>
<dbReference type="PANTHER" id="PTHR43425:SF3">
    <property type="entry name" value="NADPH-DEPENDENT OXIDOREDUCTASE"/>
    <property type="match status" value="1"/>
</dbReference>
<dbReference type="PANTHER" id="PTHR43425">
    <property type="entry name" value="OXYGEN-INSENSITIVE NADPH NITROREDUCTASE"/>
    <property type="match status" value="1"/>
</dbReference>
<dbReference type="Pfam" id="PF00881">
    <property type="entry name" value="Nitroreductase"/>
    <property type="match status" value="1"/>
</dbReference>
<dbReference type="PIRSF" id="PIRSF005426">
    <property type="entry name" value="Frp"/>
    <property type="match status" value="1"/>
</dbReference>
<dbReference type="SUPFAM" id="SSF55469">
    <property type="entry name" value="FMN-dependent nitroreductase-like"/>
    <property type="match status" value="1"/>
</dbReference>
<protein>
    <recommendedName>
        <fullName>NADPH-dependent oxidoreductase</fullName>
        <ecNumber>1.6.-.-</ecNumber>
    </recommendedName>
</protein>
<sequence length="251" mass="28609">MSDYVYNLVKKHHSVRKFKNKPLSEDVVKKLVEAGQSASTSSFLQAYSIIGIDDEKIKENLREVSGQPYVVENGYLFVFVIDYYRHHLVDQHAETDMENAYGSTEGLLVGAIDAALVAENIAVTAEDMGYGIVFLGSLRNDVERVREILDLPDYVFPVFGMAVGEPADDENGAAKPRLPFDHVFHHNKYHADKETQYAQMADYDQTISEYYDQRTNGNRKETWSQQIEMFLGNKARLDMLEQLQKSGLIQR</sequence>
<evidence type="ECO:0000250" key="1"/>
<evidence type="ECO:0000305" key="2"/>
<reference key="1">
    <citation type="journal article" date="2001" name="Lancet">
        <title>Whole genome sequencing of meticillin-resistant Staphylococcus aureus.</title>
        <authorList>
            <person name="Kuroda M."/>
            <person name="Ohta T."/>
            <person name="Uchiyama I."/>
            <person name="Baba T."/>
            <person name="Yuzawa H."/>
            <person name="Kobayashi I."/>
            <person name="Cui L."/>
            <person name="Oguchi A."/>
            <person name="Aoki K."/>
            <person name="Nagai Y."/>
            <person name="Lian J.-Q."/>
            <person name="Ito T."/>
            <person name="Kanamori M."/>
            <person name="Matsumaru H."/>
            <person name="Maruyama A."/>
            <person name="Murakami H."/>
            <person name="Hosoyama A."/>
            <person name="Mizutani-Ui Y."/>
            <person name="Takahashi N.K."/>
            <person name="Sawano T."/>
            <person name="Inoue R."/>
            <person name="Kaito C."/>
            <person name="Sekimizu K."/>
            <person name="Hirakawa H."/>
            <person name="Kuhara S."/>
            <person name="Goto S."/>
            <person name="Yabuzaki J."/>
            <person name="Kanehisa M."/>
            <person name="Yamashita A."/>
            <person name="Oshima K."/>
            <person name="Furuya K."/>
            <person name="Yoshino C."/>
            <person name="Shiba T."/>
            <person name="Hattori M."/>
            <person name="Ogasawara N."/>
            <person name="Hayashi H."/>
            <person name="Hiramatsu K."/>
        </authorList>
    </citation>
    <scope>NUCLEOTIDE SEQUENCE [LARGE SCALE GENOMIC DNA]</scope>
    <source>
        <strain>Mu50 / ATCC 700699</strain>
    </source>
</reference>
<keyword id="KW-0285">Flavoprotein</keyword>
<keyword id="KW-0288">FMN</keyword>
<keyword id="KW-0521">NADP</keyword>
<keyword id="KW-0560">Oxidoreductase</keyword>
<proteinExistence type="inferred from homology"/>
<feature type="chain" id="PRO_0000239725" description="NADPH-dependent oxidoreductase">
    <location>
        <begin position="1"/>
        <end position="251"/>
    </location>
</feature>
<comment type="function">
    <text evidence="1">Reduces FMN, organic nitro compounds and disulfide DTNB. Involved in maintenance of the cellular redox state and the disulfide stress response (By similarity).</text>
</comment>
<comment type="cofactor">
    <cofactor evidence="1">
        <name>FMN</name>
        <dbReference type="ChEBI" id="CHEBI:58210"/>
    </cofactor>
</comment>
<comment type="similarity">
    <text evidence="2">Belongs to the flavin oxidoreductase frp family.</text>
</comment>
<gene>
    <name type="primary">nfrA</name>
    <name type="ordered locus">SAV0382</name>
</gene>
<name>NFRA_STAAM</name>
<accession>Q99WJ6</accession>
<organism>
    <name type="scientific">Staphylococcus aureus (strain Mu50 / ATCC 700699)</name>
    <dbReference type="NCBI Taxonomy" id="158878"/>
    <lineage>
        <taxon>Bacteria</taxon>
        <taxon>Bacillati</taxon>
        <taxon>Bacillota</taxon>
        <taxon>Bacilli</taxon>
        <taxon>Bacillales</taxon>
        <taxon>Staphylococcaceae</taxon>
        <taxon>Staphylococcus</taxon>
    </lineage>
</organism>